<sequence>MTKIYSSIAVKKGLFTSFLLFIYVLGSRIILPFVDLNTKDFLGGSTAYLAFSAALTGGNLRSLSIFSVGLSPWMSAMILWQMFSFSKRLGLTSTSIEIQDRRKMYLTLLIAVIQSLAVSLRLPVQSSYSAILVVLMNTILLIAGTFFLVWLSDLNASMGIGGSIVILLSSMVLNIPQDVLETFQTVHIPTGIIVLLALLTLVFSYLLALMYRARYLVPVNKIGLHNRFKRYSYLEIMLNPAGGMPYMYVMSFLSVPAYLFILLGFIFPNHSGLAALSKEFMVGKPLWVYVYISVLFLFSIIFAFVTMNGEEIADRMKKSGEYIYGIYPGADTSRFINRLVLRFSVIGGLFNVIMAGGPMLFVLFDEKLLRLAMIPGLFMMFGGMIFTIRDEVKALRLNETYRPLI</sequence>
<comment type="function">
    <text evidence="1">Part of the accessory SecA2/SecY2 system specifically required for export of possible cell wall proteins. The central subunit of a protein translocation channel.</text>
</comment>
<comment type="subunit">
    <text evidence="1">Component of the accessory SecA2/SecY2 protein translocase complex required to export cell wall proteins. May form heterotrimers with SecE and SecG subunits.</text>
</comment>
<comment type="subcellular location">
    <subcellularLocation>
        <location evidence="1">Cell membrane</location>
        <topology evidence="1">Multi-pass membrane protein</topology>
    </subcellularLocation>
</comment>
<comment type="disruption phenotype">
    <text evidence="2 3">Deletion of 15 genes (from psrP, SP_1772 to SP_1756, includes the accessory Sec export proteins SecA2 and SecY2) and infection of female BALB/cJ mice, shows the psrP-secY2A2 region is required for lung infection and for infection to progress to blood. Mice infected intraperitoneally showed wild-type infection. Decreased adherence to lung but not pharynx or brain cells. The psrP-secY2A2 region deletion has no effect on bacterial growth rate, capsule levels, autolysis, or transformation (PubMed:18507531). In vitro significantly decreased biofilm formation is seen; the large deletion mutant (SP_1772 to SP_1756) is no more affected than the single psrP deletion (PubMed:20714350).</text>
</comment>
<comment type="miscellaneous">
    <text evidence="2 3 4 5">Encoded in RD10, a pathogenicity island with an atypical GC content that is associated with invasive pneumococcal disease. Pathogenicity islands account for greater than half the genomic diversity observed between isolates (PubMed:11463916, PubMed:16861665). The main function of this island seems to be correct synthesis and export of pneumococcal serine-rich repeat protein PsrP (PubMed:18507531, PubMed:20714350).</text>
</comment>
<comment type="similarity">
    <text evidence="1">Belongs to the SecY/SEC61-alpha family. SecY2 subfamily.</text>
</comment>
<dbReference type="EMBL" id="AE005672">
    <property type="protein sequence ID" value="AAK75838.1"/>
    <property type="molecule type" value="Genomic_DNA"/>
</dbReference>
<dbReference type="PIR" id="E95205">
    <property type="entry name" value="E95205"/>
</dbReference>
<dbReference type="RefSeq" id="WP_000161876.1">
    <property type="nucleotide sequence ID" value="NC_003028.3"/>
</dbReference>
<dbReference type="SMR" id="Q97P79"/>
<dbReference type="PaxDb" id="170187-SP_1763"/>
<dbReference type="EnsemblBacteria" id="AAK75838">
    <property type="protein sequence ID" value="AAK75838"/>
    <property type="gene ID" value="SP_1763"/>
</dbReference>
<dbReference type="KEGG" id="spn:SP_1763"/>
<dbReference type="eggNOG" id="COG0201">
    <property type="taxonomic scope" value="Bacteria"/>
</dbReference>
<dbReference type="PhylomeDB" id="Q97P79"/>
<dbReference type="BioCyc" id="SPNE170187:G1FZB-1788-MONOMER"/>
<dbReference type="Proteomes" id="UP000000585">
    <property type="component" value="Chromosome"/>
</dbReference>
<dbReference type="GO" id="GO:0005886">
    <property type="term" value="C:plasma membrane"/>
    <property type="evidence" value="ECO:0007669"/>
    <property type="project" value="UniProtKB-SubCell"/>
</dbReference>
<dbReference type="GO" id="GO:0065002">
    <property type="term" value="P:intracellular protein transmembrane transport"/>
    <property type="evidence" value="ECO:0007669"/>
    <property type="project" value="UniProtKB-UniRule"/>
</dbReference>
<dbReference type="GO" id="GO:0006605">
    <property type="term" value="P:protein targeting"/>
    <property type="evidence" value="ECO:0007669"/>
    <property type="project" value="UniProtKB-UniRule"/>
</dbReference>
<dbReference type="Gene3D" id="1.10.3370.10">
    <property type="entry name" value="SecY subunit domain"/>
    <property type="match status" value="1"/>
</dbReference>
<dbReference type="HAMAP" id="MF_01466">
    <property type="entry name" value="SecY2"/>
    <property type="match status" value="1"/>
</dbReference>
<dbReference type="InterPro" id="IPR002208">
    <property type="entry name" value="SecY/SEC61-alpha"/>
</dbReference>
<dbReference type="InterPro" id="IPR014269">
    <property type="entry name" value="SecY2"/>
</dbReference>
<dbReference type="InterPro" id="IPR023201">
    <property type="entry name" value="SecY_dom_sf"/>
</dbReference>
<dbReference type="NCBIfam" id="TIGR02920">
    <property type="entry name" value="acc_sec_Y2"/>
    <property type="match status" value="1"/>
</dbReference>
<dbReference type="NCBIfam" id="NF009082">
    <property type="entry name" value="PRK12417.1"/>
    <property type="match status" value="1"/>
</dbReference>
<dbReference type="PANTHER" id="PTHR10906">
    <property type="entry name" value="SECY/SEC61-ALPHA FAMILY MEMBER"/>
    <property type="match status" value="1"/>
</dbReference>
<dbReference type="Pfam" id="PF00344">
    <property type="entry name" value="SecY"/>
    <property type="match status" value="1"/>
</dbReference>
<dbReference type="PIRSF" id="PIRSF004557">
    <property type="entry name" value="SecY"/>
    <property type="match status" value="1"/>
</dbReference>
<dbReference type="PRINTS" id="PR00303">
    <property type="entry name" value="SECYTRNLCASE"/>
</dbReference>
<dbReference type="SUPFAM" id="SSF103491">
    <property type="entry name" value="Preprotein translocase SecY subunit"/>
    <property type="match status" value="1"/>
</dbReference>
<reference key="1">
    <citation type="journal article" date="2001" name="Science">
        <title>Complete genome sequence of a virulent isolate of Streptococcus pneumoniae.</title>
        <authorList>
            <person name="Tettelin H."/>
            <person name="Nelson K.E."/>
            <person name="Paulsen I.T."/>
            <person name="Eisen J.A."/>
            <person name="Read T.D."/>
            <person name="Peterson S.N."/>
            <person name="Heidelberg J.F."/>
            <person name="DeBoy R.T."/>
            <person name="Haft D.H."/>
            <person name="Dodson R.J."/>
            <person name="Durkin A.S."/>
            <person name="Gwinn M.L."/>
            <person name="Kolonay J.F."/>
            <person name="Nelson W.C."/>
            <person name="Peterson J.D."/>
            <person name="Umayam L.A."/>
            <person name="White O."/>
            <person name="Salzberg S.L."/>
            <person name="Lewis M.R."/>
            <person name="Radune D."/>
            <person name="Holtzapple E.K."/>
            <person name="Khouri H.M."/>
            <person name="Wolf A.M."/>
            <person name="Utterback T.R."/>
            <person name="Hansen C.L."/>
            <person name="McDonald L.A."/>
            <person name="Feldblyum T.V."/>
            <person name="Angiuoli S.V."/>
            <person name="Dickinson T."/>
            <person name="Hickey E.K."/>
            <person name="Holt I.E."/>
            <person name="Loftus B.J."/>
            <person name="Yang F."/>
            <person name="Smith H.O."/>
            <person name="Venter J.C."/>
            <person name="Dougherty B.A."/>
            <person name="Morrison D.A."/>
            <person name="Hollingshead S.K."/>
            <person name="Fraser C.M."/>
        </authorList>
    </citation>
    <scope>NUCLEOTIDE SEQUENCE [LARGE SCALE GENOMIC DNA]</scope>
    <source>
        <strain>ATCC BAA-334 / TIGR4</strain>
    </source>
</reference>
<reference key="2">
    <citation type="journal article" date="2006" name="Infect. Immun.">
        <title>Identification of a candidate Streptococcus pneumoniae core genome and regions of diversity correlated with invasive pneumococcal disease.</title>
        <authorList>
            <person name="Obert C."/>
            <person name="Sublett J."/>
            <person name="Kaushal D."/>
            <person name="Hinojosa E."/>
            <person name="Barton T."/>
            <person name="Tuomanen E.I."/>
            <person name="Orihuela C.J."/>
        </authorList>
    </citation>
    <scope>DISCUSSION OF SEQUENCE</scope>
    <source>
        <strain>ATCC BAA-334 / TIGR4</strain>
    </source>
</reference>
<reference key="3">
    <citation type="journal article" date="2008" name="J. Infect. Dis.">
        <title>Antibodies against PsrP, a novel Streptococcus pneumoniae adhesin, block adhesion and protect mice against pneumococcal challenge.</title>
        <authorList>
            <person name="Rose L."/>
            <person name="Shivshankar P."/>
            <person name="Hinojosa E."/>
            <person name="Rodriguez A."/>
            <person name="Sanchez C.J."/>
            <person name="Orihuela C.J."/>
        </authorList>
    </citation>
    <scope>DISRUPTION PHENOTYPE</scope>
    <source>
        <strain>ATCC BAA-334 / TIGR4</strain>
    </source>
</reference>
<reference key="4">
    <citation type="journal article" date="2010" name="PLoS Pathog.">
        <title>The pneumococcal serine-rich repeat protein is an intra-species bacterial adhesin that promotes bacterial aggregation in vivo and in biofilms.</title>
        <authorList>
            <person name="Sanchez C.J."/>
            <person name="Shivshankar P."/>
            <person name="Stol K."/>
            <person name="Trakhtenbroit S."/>
            <person name="Sullam P.M."/>
            <person name="Sauer K."/>
            <person name="Hermans P.W."/>
            <person name="Orihuela C.J."/>
        </authorList>
    </citation>
    <scope>DISRUPTION PHENOTYPE</scope>
    <source>
        <strain>ATCC BAA-334 / TIGR4</strain>
    </source>
</reference>
<organism>
    <name type="scientific">Streptococcus pneumoniae serotype 4 (strain ATCC BAA-334 / TIGR4)</name>
    <dbReference type="NCBI Taxonomy" id="170187"/>
    <lineage>
        <taxon>Bacteria</taxon>
        <taxon>Bacillati</taxon>
        <taxon>Bacillota</taxon>
        <taxon>Bacilli</taxon>
        <taxon>Lactobacillales</taxon>
        <taxon>Streptococcaceae</taxon>
        <taxon>Streptococcus</taxon>
    </lineage>
</organism>
<feature type="chain" id="PRO_0000414878" description="Accessory Sec system protein translocase subunit SecY2">
    <location>
        <begin position="1"/>
        <end position="405"/>
    </location>
</feature>
<feature type="transmembrane region" description="Helical" evidence="1">
    <location>
        <begin position="14"/>
        <end position="34"/>
    </location>
</feature>
<feature type="transmembrane region" description="Helical" evidence="1">
    <location>
        <begin position="65"/>
        <end position="85"/>
    </location>
</feature>
<feature type="transmembrane region" description="Helical" evidence="1">
    <location>
        <begin position="104"/>
        <end position="124"/>
    </location>
</feature>
<feature type="transmembrane region" description="Helical" evidence="1">
    <location>
        <begin position="131"/>
        <end position="151"/>
    </location>
</feature>
<feature type="transmembrane region" description="Helical" evidence="1">
    <location>
        <begin position="156"/>
        <end position="176"/>
    </location>
</feature>
<feature type="transmembrane region" description="Helical" evidence="1">
    <location>
        <begin position="191"/>
        <end position="211"/>
    </location>
</feature>
<feature type="transmembrane region" description="Helical" evidence="1">
    <location>
        <begin position="247"/>
        <end position="267"/>
    </location>
</feature>
<feature type="transmembrane region" description="Helical" evidence="1">
    <location>
        <begin position="285"/>
        <end position="305"/>
    </location>
</feature>
<feature type="transmembrane region" description="Helical" evidence="1">
    <location>
        <begin position="343"/>
        <end position="363"/>
    </location>
</feature>
<feature type="transmembrane region" description="Helical" evidence="1">
    <location>
        <begin position="368"/>
        <end position="388"/>
    </location>
</feature>
<evidence type="ECO:0000255" key="1">
    <source>
        <dbReference type="HAMAP-Rule" id="MF_01466"/>
    </source>
</evidence>
<evidence type="ECO:0000269" key="2">
    <source>
    </source>
</evidence>
<evidence type="ECO:0000269" key="3">
    <source>
    </source>
</evidence>
<evidence type="ECO:0000303" key="4">
    <source>
    </source>
</evidence>
<evidence type="ECO:0000303" key="5">
    <source>
    </source>
</evidence>
<accession>Q97P79</accession>
<gene>
    <name evidence="1" type="primary">secY2</name>
    <name type="ordered locus">SP_1763</name>
</gene>
<protein>
    <recommendedName>
        <fullName evidence="1">Accessory Sec system protein translocase subunit SecY2</fullName>
    </recommendedName>
</protein>
<keyword id="KW-1003">Cell membrane</keyword>
<keyword id="KW-0472">Membrane</keyword>
<keyword id="KW-0653">Protein transport</keyword>
<keyword id="KW-1185">Reference proteome</keyword>
<keyword id="KW-0811">Translocation</keyword>
<keyword id="KW-0812">Transmembrane</keyword>
<keyword id="KW-1133">Transmembrane helix</keyword>
<keyword id="KW-0813">Transport</keyword>
<name>SECY2_STRPN</name>
<proteinExistence type="inferred from homology"/>